<evidence type="ECO:0000250" key="1"/>
<evidence type="ECO:0000255" key="2"/>
<evidence type="ECO:0000255" key="3">
    <source>
        <dbReference type="PROSITE-ProRule" id="PRU00270"/>
    </source>
</evidence>
<evidence type="ECO:0000269" key="4">
    <source>
    </source>
</evidence>
<name>PLC_STAA8</name>
<comment type="function">
    <text evidence="1">Cleaves glycosylphosphatidylinositol (GPI) and phosphatidylinositol (PI) anchors but not PI phosphates. Potential virulence factor (By similarity).</text>
</comment>
<comment type="catalytic activity">
    <reaction>
        <text>a 1,2-diacyl-sn-glycero-3-phospho-(1D-myo-inositol) = 1D-myo-inositol 1,2-cyclic phosphate + a 1,2-diacyl-sn-glycerol</text>
        <dbReference type="Rhea" id="RHEA:17093"/>
        <dbReference type="ChEBI" id="CHEBI:17815"/>
        <dbReference type="ChEBI" id="CHEBI:57880"/>
        <dbReference type="ChEBI" id="CHEBI:58484"/>
        <dbReference type="EC" id="4.6.1.13"/>
    </reaction>
</comment>
<comment type="subcellular location">
    <subcellularLocation>
        <location evidence="4">Secreted</location>
    </subcellularLocation>
</comment>
<comment type="induction">
    <text evidence="4">Less protein is secreted in a secG or double secG/secY2 mutant (at protein level).</text>
</comment>
<protein>
    <recommendedName>
        <fullName>1-phosphatidylinositol phosphodiesterase</fullName>
        <ecNumber>4.6.1.13</ecNumber>
    </recommendedName>
    <alternativeName>
        <fullName>Phosphatidylinositol diacylglycerol-lyase</fullName>
    </alternativeName>
    <alternativeName>
        <fullName>Phosphatidylinositol-specific phospholipase C</fullName>
        <shortName>PI-PLC</shortName>
    </alternativeName>
</protein>
<gene>
    <name type="primary">plc</name>
    <name type="ordered locus">SAOUHSC_00051</name>
</gene>
<proteinExistence type="evidence at protein level"/>
<keyword id="KW-0378">Hydrolase</keyword>
<keyword id="KW-0442">Lipid degradation</keyword>
<keyword id="KW-0443">Lipid metabolism</keyword>
<keyword id="KW-0456">Lyase</keyword>
<keyword id="KW-1185">Reference proteome</keyword>
<keyword id="KW-0964">Secreted</keyword>
<keyword id="KW-0732">Signal</keyword>
<keyword id="KW-0807">Transducer</keyword>
<keyword id="KW-0843">Virulence</keyword>
<organism>
    <name type="scientific">Staphylococcus aureus (strain NCTC 8325 / PS 47)</name>
    <dbReference type="NCBI Taxonomy" id="93061"/>
    <lineage>
        <taxon>Bacteria</taxon>
        <taxon>Bacillati</taxon>
        <taxon>Bacillota</taxon>
        <taxon>Bacilli</taxon>
        <taxon>Bacillales</taxon>
        <taxon>Staphylococcaceae</taxon>
        <taxon>Staphylococcus</taxon>
    </lineage>
</organism>
<dbReference type="EC" id="4.6.1.13"/>
<dbReference type="EMBL" id="CP000253">
    <property type="protein sequence ID" value="ABD29239.1"/>
    <property type="molecule type" value="Genomic_DNA"/>
</dbReference>
<dbReference type="RefSeq" id="WP_000710576.1">
    <property type="nucleotide sequence ID" value="NZ_LS483365.1"/>
</dbReference>
<dbReference type="RefSeq" id="YP_498656.1">
    <property type="nucleotide sequence ID" value="NC_007795.1"/>
</dbReference>
<dbReference type="SMR" id="Q2G1Q2"/>
<dbReference type="STRING" id="93061.SAOUHSC_00051"/>
<dbReference type="PaxDb" id="1280-SAXN108_0086"/>
<dbReference type="GeneID" id="3919083"/>
<dbReference type="KEGG" id="sao:SAOUHSC_00051"/>
<dbReference type="PATRIC" id="fig|93061.5.peg.45"/>
<dbReference type="eggNOG" id="COG0823">
    <property type="taxonomic scope" value="Bacteria"/>
</dbReference>
<dbReference type="HOGENOM" id="CLU_024117_3_1_9"/>
<dbReference type="OrthoDB" id="7191982at2"/>
<dbReference type="PRO" id="PR:Q2G1Q2"/>
<dbReference type="Proteomes" id="UP000008816">
    <property type="component" value="Chromosome"/>
</dbReference>
<dbReference type="GO" id="GO:0005576">
    <property type="term" value="C:extracellular region"/>
    <property type="evidence" value="ECO:0007669"/>
    <property type="project" value="UniProtKB-SubCell"/>
</dbReference>
<dbReference type="GO" id="GO:0004436">
    <property type="term" value="F:phosphatidylinositol diacylglycerol-lyase activity"/>
    <property type="evidence" value="ECO:0007669"/>
    <property type="project" value="UniProtKB-EC"/>
</dbReference>
<dbReference type="GO" id="GO:0008081">
    <property type="term" value="F:phosphoric diester hydrolase activity"/>
    <property type="evidence" value="ECO:0000318"/>
    <property type="project" value="GO_Central"/>
</dbReference>
<dbReference type="GO" id="GO:0016042">
    <property type="term" value="P:lipid catabolic process"/>
    <property type="evidence" value="ECO:0007669"/>
    <property type="project" value="UniProtKB-KW"/>
</dbReference>
<dbReference type="GO" id="GO:0007165">
    <property type="term" value="P:signal transduction"/>
    <property type="evidence" value="ECO:0007669"/>
    <property type="project" value="UniProtKB-KW"/>
</dbReference>
<dbReference type="CDD" id="cd08586">
    <property type="entry name" value="PI-PLCc_BcPLC_like"/>
    <property type="match status" value="1"/>
</dbReference>
<dbReference type="Gene3D" id="3.20.20.190">
    <property type="entry name" value="Phosphatidylinositol (PI) phosphodiesterase"/>
    <property type="match status" value="1"/>
</dbReference>
<dbReference type="InterPro" id="IPR051057">
    <property type="entry name" value="PI-PLC_domain"/>
</dbReference>
<dbReference type="InterPro" id="IPR017946">
    <property type="entry name" value="PLC-like_Pdiesterase_TIM-brl"/>
</dbReference>
<dbReference type="InterPro" id="IPR000909">
    <property type="entry name" value="PLipase_C_PInositol-sp_X_dom"/>
</dbReference>
<dbReference type="PANTHER" id="PTHR13593">
    <property type="match status" value="1"/>
</dbReference>
<dbReference type="PANTHER" id="PTHR13593:SF113">
    <property type="entry name" value="SI:DKEY-266F7.9"/>
    <property type="match status" value="1"/>
</dbReference>
<dbReference type="Pfam" id="PF00388">
    <property type="entry name" value="PI-PLC-X"/>
    <property type="match status" value="1"/>
</dbReference>
<dbReference type="SMART" id="SM00148">
    <property type="entry name" value="PLCXc"/>
    <property type="match status" value="1"/>
</dbReference>
<dbReference type="SUPFAM" id="SSF51695">
    <property type="entry name" value="PLC-like phosphodiesterases"/>
    <property type="match status" value="1"/>
</dbReference>
<dbReference type="PROSITE" id="PS50007">
    <property type="entry name" value="PIPLC_X_DOMAIN"/>
    <property type="match status" value="1"/>
</dbReference>
<sequence>MKKCIKTLFLSIILVVMSGWYHSAHASDSLSKSPENWMSKLDDGKHLTEINIPGSHDSGSFTLKDPVKSVWAKTQDKDYLTQMKSGVRFFDIRGRASADNMISVHHGMVYLHHELGKFLDDAKYYLSAYPNETIVMSMKKDYDSDSKVTKTFEEIFREYYYNNPQYQNLFYTGSNANPTLKETKGKIVLFNRMGGTYIKSGYGADTSGIQWADNATFETKINNGSLNLKVQDEYKDYYDKKVEAVKNLLAKAKTDSNKDNVYVNFLSVASGGSAFNSTYNYASHINPEIAKTIKANGKARTGWLIVDYAGYTWPGYDDIVSEIIDSNK</sequence>
<accession>Q2G1Q2</accession>
<reference key="1">
    <citation type="book" date="2006" name="Gram positive pathogens, 2nd edition">
        <title>The Staphylococcus aureus NCTC 8325 genome.</title>
        <editorList>
            <person name="Fischetti V."/>
            <person name="Novick R."/>
            <person name="Ferretti J."/>
            <person name="Portnoy D."/>
            <person name="Rood J."/>
        </editorList>
        <authorList>
            <person name="Gillaspy A.F."/>
            <person name="Worrell V."/>
            <person name="Orvis J."/>
            <person name="Roe B.A."/>
            <person name="Dyer D.W."/>
            <person name="Iandolo J.J."/>
        </authorList>
    </citation>
    <scope>NUCLEOTIDE SEQUENCE [LARGE SCALE GENOMIC DNA]</scope>
    <source>
        <strain>NCTC 8325 / PS 47</strain>
    </source>
</reference>
<reference key="2">
    <citation type="journal article" date="2010" name="J. Bacteriol.">
        <title>Synthetic effects of secG and secY2 mutations on exoproteome biogenesis in Staphylococcus aureus.</title>
        <authorList>
            <person name="Sibbald M.J."/>
            <person name="Winter T."/>
            <person name="van der Kooi-Pol M.M."/>
            <person name="Buist G."/>
            <person name="Tsompanidou E."/>
            <person name="Bosma T."/>
            <person name="Schafer T."/>
            <person name="Ohlsen K."/>
            <person name="Hecker M."/>
            <person name="Antelmann H."/>
            <person name="Engelmann S."/>
            <person name="van Dijl J.M."/>
        </authorList>
    </citation>
    <scope>IDENTIFICATION BY MASS SPECTROMETRY</scope>
    <scope>SUBCELLULAR LOCATION</scope>
    <scope>INDUCTION</scope>
    <source>
        <strain>RN4220</strain>
    </source>
</reference>
<feature type="signal peptide" evidence="2">
    <location>
        <begin position="1"/>
        <end position="26"/>
    </location>
</feature>
<feature type="chain" id="PRO_0000414603" description="1-phosphatidylinositol phosphodiesterase">
    <location>
        <begin position="27"/>
        <end position="328"/>
    </location>
</feature>
<feature type="domain" description="PI-PLC X-box" evidence="3">
    <location>
        <begin position="41"/>
        <end position="192"/>
    </location>
</feature>
<feature type="active site" evidence="3">
    <location>
        <position position="56"/>
    </location>
</feature>
<feature type="active site" evidence="3">
    <location>
        <position position="106"/>
    </location>
</feature>